<name>HIS6_PELTS</name>
<proteinExistence type="inferred from homology"/>
<protein>
    <recommendedName>
        <fullName evidence="1">Imidazole glycerol phosphate synthase subunit HisF</fullName>
        <ecNumber evidence="1">4.3.2.10</ecNumber>
    </recommendedName>
    <alternativeName>
        <fullName evidence="1">IGP synthase cyclase subunit</fullName>
    </alternativeName>
    <alternativeName>
        <fullName evidence="1">IGP synthase subunit HisF</fullName>
    </alternativeName>
    <alternativeName>
        <fullName evidence="1">ImGP synthase subunit HisF</fullName>
        <shortName evidence="1">IGPS subunit HisF</shortName>
    </alternativeName>
</protein>
<comment type="function">
    <text evidence="1">IGPS catalyzes the conversion of PRFAR and glutamine to IGP, AICAR and glutamate. The HisF subunit catalyzes the cyclization activity that produces IGP and AICAR from PRFAR using the ammonia provided by the HisH subunit.</text>
</comment>
<comment type="catalytic activity">
    <reaction evidence="1">
        <text>5-[(5-phospho-1-deoxy-D-ribulos-1-ylimino)methylamino]-1-(5-phospho-beta-D-ribosyl)imidazole-4-carboxamide + L-glutamine = D-erythro-1-(imidazol-4-yl)glycerol 3-phosphate + 5-amino-1-(5-phospho-beta-D-ribosyl)imidazole-4-carboxamide + L-glutamate + H(+)</text>
        <dbReference type="Rhea" id="RHEA:24793"/>
        <dbReference type="ChEBI" id="CHEBI:15378"/>
        <dbReference type="ChEBI" id="CHEBI:29985"/>
        <dbReference type="ChEBI" id="CHEBI:58278"/>
        <dbReference type="ChEBI" id="CHEBI:58359"/>
        <dbReference type="ChEBI" id="CHEBI:58475"/>
        <dbReference type="ChEBI" id="CHEBI:58525"/>
        <dbReference type="EC" id="4.3.2.10"/>
    </reaction>
</comment>
<comment type="pathway">
    <text evidence="1">Amino-acid biosynthesis; L-histidine biosynthesis; L-histidine from 5-phospho-alpha-D-ribose 1-diphosphate: step 5/9.</text>
</comment>
<comment type="subunit">
    <text evidence="1">Heterodimer of HisH and HisF.</text>
</comment>
<comment type="subcellular location">
    <subcellularLocation>
        <location evidence="1">Cytoplasm</location>
    </subcellularLocation>
</comment>
<comment type="similarity">
    <text evidence="1">Belongs to the HisA/HisF family.</text>
</comment>
<evidence type="ECO:0000255" key="1">
    <source>
        <dbReference type="HAMAP-Rule" id="MF_01013"/>
    </source>
</evidence>
<keyword id="KW-0028">Amino-acid biosynthesis</keyword>
<keyword id="KW-0963">Cytoplasm</keyword>
<keyword id="KW-0368">Histidine biosynthesis</keyword>
<keyword id="KW-0456">Lyase</keyword>
<keyword id="KW-1185">Reference proteome</keyword>
<organism>
    <name type="scientific">Pelotomaculum thermopropionicum (strain DSM 13744 / JCM 10971 / SI)</name>
    <dbReference type="NCBI Taxonomy" id="370438"/>
    <lineage>
        <taxon>Bacteria</taxon>
        <taxon>Bacillati</taxon>
        <taxon>Bacillota</taxon>
        <taxon>Clostridia</taxon>
        <taxon>Eubacteriales</taxon>
        <taxon>Desulfotomaculaceae</taxon>
        <taxon>Pelotomaculum</taxon>
    </lineage>
</organism>
<sequence>MLQKRIIPCLDVTEGRVVKGTNFINLRDAGDPVELAAFYDREGADELVFLDITASAEGRKTTVEMVYRTAGEVFIPFTVGGGISTLEDIRFILSAGADKVSINTAAVKDPQLVTEAANRFGSQCIVVAIDARQRGPESWEVYIHGGRTPTGIDAVEWAKKAEFLGAGEILLTSMDRDGTKDGYDLALTRAVARAVNIPVIASGGAGSLEHLYEGLTEGEADAVLAASIFHFGEYSIREAKEYLRSRGVPVRI</sequence>
<gene>
    <name evidence="1" type="primary">hisF</name>
    <name type="ordered locus">PTH_2532</name>
</gene>
<accession>A5CZ73</accession>
<feature type="chain" id="PRO_1000084068" description="Imidazole glycerol phosphate synthase subunit HisF">
    <location>
        <begin position="1"/>
        <end position="252"/>
    </location>
</feature>
<feature type="active site" evidence="1">
    <location>
        <position position="11"/>
    </location>
</feature>
<feature type="active site" evidence="1">
    <location>
        <position position="130"/>
    </location>
</feature>
<reference key="1">
    <citation type="journal article" date="2008" name="Genome Res.">
        <title>The genome of Pelotomaculum thermopropionicum reveals niche-associated evolution in anaerobic microbiota.</title>
        <authorList>
            <person name="Kosaka T."/>
            <person name="Kato S."/>
            <person name="Shimoyama T."/>
            <person name="Ishii S."/>
            <person name="Abe T."/>
            <person name="Watanabe K."/>
        </authorList>
    </citation>
    <scope>NUCLEOTIDE SEQUENCE [LARGE SCALE GENOMIC DNA]</scope>
    <source>
        <strain>DSM 13744 / JCM 10971 / SI</strain>
    </source>
</reference>
<dbReference type="EC" id="4.3.2.10" evidence="1"/>
<dbReference type="EMBL" id="AP009389">
    <property type="protein sequence ID" value="BAF60713.1"/>
    <property type="molecule type" value="Genomic_DNA"/>
</dbReference>
<dbReference type="SMR" id="A5CZ73"/>
<dbReference type="STRING" id="370438.PTH_2532"/>
<dbReference type="KEGG" id="pth:PTH_2532"/>
<dbReference type="eggNOG" id="COG0107">
    <property type="taxonomic scope" value="Bacteria"/>
</dbReference>
<dbReference type="HOGENOM" id="CLU_048577_4_0_9"/>
<dbReference type="UniPathway" id="UPA00031">
    <property type="reaction ID" value="UER00010"/>
</dbReference>
<dbReference type="Proteomes" id="UP000006556">
    <property type="component" value="Chromosome"/>
</dbReference>
<dbReference type="GO" id="GO:0005737">
    <property type="term" value="C:cytoplasm"/>
    <property type="evidence" value="ECO:0007669"/>
    <property type="project" value="UniProtKB-SubCell"/>
</dbReference>
<dbReference type="GO" id="GO:0000107">
    <property type="term" value="F:imidazoleglycerol-phosphate synthase activity"/>
    <property type="evidence" value="ECO:0007669"/>
    <property type="project" value="UniProtKB-UniRule"/>
</dbReference>
<dbReference type="GO" id="GO:0016829">
    <property type="term" value="F:lyase activity"/>
    <property type="evidence" value="ECO:0007669"/>
    <property type="project" value="UniProtKB-KW"/>
</dbReference>
<dbReference type="GO" id="GO:0000105">
    <property type="term" value="P:L-histidine biosynthetic process"/>
    <property type="evidence" value="ECO:0007669"/>
    <property type="project" value="UniProtKB-UniRule"/>
</dbReference>
<dbReference type="CDD" id="cd04731">
    <property type="entry name" value="HisF"/>
    <property type="match status" value="1"/>
</dbReference>
<dbReference type="FunFam" id="3.20.20.70:FF:000006">
    <property type="entry name" value="Imidazole glycerol phosphate synthase subunit HisF"/>
    <property type="match status" value="1"/>
</dbReference>
<dbReference type="Gene3D" id="3.20.20.70">
    <property type="entry name" value="Aldolase class I"/>
    <property type="match status" value="1"/>
</dbReference>
<dbReference type="HAMAP" id="MF_01013">
    <property type="entry name" value="HisF"/>
    <property type="match status" value="1"/>
</dbReference>
<dbReference type="InterPro" id="IPR013785">
    <property type="entry name" value="Aldolase_TIM"/>
</dbReference>
<dbReference type="InterPro" id="IPR006062">
    <property type="entry name" value="His_biosynth"/>
</dbReference>
<dbReference type="InterPro" id="IPR004651">
    <property type="entry name" value="HisF"/>
</dbReference>
<dbReference type="InterPro" id="IPR050064">
    <property type="entry name" value="IGPS_HisA/HisF"/>
</dbReference>
<dbReference type="InterPro" id="IPR011060">
    <property type="entry name" value="RibuloseP-bd_barrel"/>
</dbReference>
<dbReference type="NCBIfam" id="TIGR00735">
    <property type="entry name" value="hisF"/>
    <property type="match status" value="1"/>
</dbReference>
<dbReference type="PANTHER" id="PTHR21235:SF2">
    <property type="entry name" value="IMIDAZOLE GLYCEROL PHOSPHATE SYNTHASE HISHF"/>
    <property type="match status" value="1"/>
</dbReference>
<dbReference type="PANTHER" id="PTHR21235">
    <property type="entry name" value="IMIDAZOLE GLYCEROL PHOSPHATE SYNTHASE SUBUNIT HISF/H IGP SYNTHASE SUBUNIT HISF/H"/>
    <property type="match status" value="1"/>
</dbReference>
<dbReference type="Pfam" id="PF00977">
    <property type="entry name" value="His_biosynth"/>
    <property type="match status" value="1"/>
</dbReference>
<dbReference type="SUPFAM" id="SSF51366">
    <property type="entry name" value="Ribulose-phoshate binding barrel"/>
    <property type="match status" value="1"/>
</dbReference>